<gene>
    <name evidence="1" type="primary">purC</name>
    <name type="ordered locus">RoseRS_2552</name>
</gene>
<reference key="1">
    <citation type="submission" date="2007-04" db="EMBL/GenBank/DDBJ databases">
        <title>Complete sequence of Roseiflexus sp. RS-1.</title>
        <authorList>
            <consortium name="US DOE Joint Genome Institute"/>
            <person name="Copeland A."/>
            <person name="Lucas S."/>
            <person name="Lapidus A."/>
            <person name="Barry K."/>
            <person name="Detter J.C."/>
            <person name="Glavina del Rio T."/>
            <person name="Hammon N."/>
            <person name="Israni S."/>
            <person name="Dalin E."/>
            <person name="Tice H."/>
            <person name="Pitluck S."/>
            <person name="Chertkov O."/>
            <person name="Brettin T."/>
            <person name="Bruce D."/>
            <person name="Han C."/>
            <person name="Schmutz J."/>
            <person name="Larimer F."/>
            <person name="Land M."/>
            <person name="Hauser L."/>
            <person name="Kyrpides N."/>
            <person name="Mikhailova N."/>
            <person name="Bryant D.A."/>
            <person name="Richardson P."/>
        </authorList>
    </citation>
    <scope>NUCLEOTIDE SEQUENCE [LARGE SCALE GENOMIC DNA]</scope>
    <source>
        <strain>RS-1</strain>
    </source>
</reference>
<name>PUR7_ROSS1</name>
<protein>
    <recommendedName>
        <fullName evidence="1">Phosphoribosylaminoimidazole-succinocarboxamide synthase</fullName>
        <ecNumber evidence="1">6.3.2.6</ecNumber>
    </recommendedName>
    <alternativeName>
        <fullName evidence="1">SAICAR synthetase</fullName>
    </alternativeName>
</protein>
<feature type="chain" id="PRO_1000076465" description="Phosphoribosylaminoimidazole-succinocarboxamide synthase">
    <location>
        <begin position="1"/>
        <end position="249"/>
    </location>
</feature>
<sequence length="249" mass="27755">MNLGEKLAEGKTKIVYAHPTDPTLAIIVHKDGISAGDGARRHTIPGKGALSGRTTANVFTMLNRAGVATHFVAAPEPSVMVVYRCAMIPLEVVNRRIATGSYIRRNPDVAEGTRFDPPLLEFFLKDDARHDPQMTPDEIIAQGIASADEVEQMASESRRVFLLIEEAWAAQDVVLCDLKIEFGRDTSGRLLVADVIDNDSWRIWPGGVKERMLDKQVYRNMPVVTDEGLEQVRRLYEEVAQRTDAWVNQ</sequence>
<dbReference type="EC" id="6.3.2.6" evidence="1"/>
<dbReference type="EMBL" id="CP000686">
    <property type="protein sequence ID" value="ABQ90928.1"/>
    <property type="molecule type" value="Genomic_DNA"/>
</dbReference>
<dbReference type="RefSeq" id="WP_011957272.1">
    <property type="nucleotide sequence ID" value="NC_009523.1"/>
</dbReference>
<dbReference type="SMR" id="A5UWC5"/>
<dbReference type="STRING" id="357808.RoseRS_2552"/>
<dbReference type="KEGG" id="rrs:RoseRS_2552"/>
<dbReference type="eggNOG" id="COG0152">
    <property type="taxonomic scope" value="Bacteria"/>
</dbReference>
<dbReference type="HOGENOM" id="CLU_061495_1_1_0"/>
<dbReference type="OrthoDB" id="9801549at2"/>
<dbReference type="UniPathway" id="UPA00074">
    <property type="reaction ID" value="UER00131"/>
</dbReference>
<dbReference type="Proteomes" id="UP000006554">
    <property type="component" value="Chromosome"/>
</dbReference>
<dbReference type="GO" id="GO:0005524">
    <property type="term" value="F:ATP binding"/>
    <property type="evidence" value="ECO:0007669"/>
    <property type="project" value="UniProtKB-KW"/>
</dbReference>
<dbReference type="GO" id="GO:0004639">
    <property type="term" value="F:phosphoribosylaminoimidazolesuccinocarboxamide synthase activity"/>
    <property type="evidence" value="ECO:0007669"/>
    <property type="project" value="UniProtKB-UniRule"/>
</dbReference>
<dbReference type="GO" id="GO:0006189">
    <property type="term" value="P:'de novo' IMP biosynthetic process"/>
    <property type="evidence" value="ECO:0007669"/>
    <property type="project" value="UniProtKB-UniRule"/>
</dbReference>
<dbReference type="CDD" id="cd01416">
    <property type="entry name" value="SAICAR_synt_Ade5"/>
    <property type="match status" value="1"/>
</dbReference>
<dbReference type="FunFam" id="3.30.470.20:FF:000020">
    <property type="entry name" value="Probable multifunctional protein ADE2"/>
    <property type="match status" value="1"/>
</dbReference>
<dbReference type="Gene3D" id="3.30.470.20">
    <property type="entry name" value="ATP-grasp fold, B domain"/>
    <property type="match status" value="1"/>
</dbReference>
<dbReference type="Gene3D" id="3.30.200.20">
    <property type="entry name" value="Phosphorylase Kinase, domain 1"/>
    <property type="match status" value="1"/>
</dbReference>
<dbReference type="HAMAP" id="MF_00137">
    <property type="entry name" value="SAICAR_synth"/>
    <property type="match status" value="1"/>
</dbReference>
<dbReference type="InterPro" id="IPR028923">
    <property type="entry name" value="SAICAR_synt/ADE2_N"/>
</dbReference>
<dbReference type="InterPro" id="IPR050089">
    <property type="entry name" value="SAICAR_synthetase"/>
</dbReference>
<dbReference type="InterPro" id="IPR018236">
    <property type="entry name" value="SAICAR_synthetase_CS"/>
</dbReference>
<dbReference type="PANTHER" id="PTHR43599">
    <property type="entry name" value="MULTIFUNCTIONAL PROTEIN ADE2"/>
    <property type="match status" value="1"/>
</dbReference>
<dbReference type="PANTHER" id="PTHR43599:SF3">
    <property type="entry name" value="SI:DKEY-6E2.2"/>
    <property type="match status" value="1"/>
</dbReference>
<dbReference type="Pfam" id="PF01259">
    <property type="entry name" value="SAICAR_synt"/>
    <property type="match status" value="1"/>
</dbReference>
<dbReference type="SUPFAM" id="SSF56104">
    <property type="entry name" value="SAICAR synthase-like"/>
    <property type="match status" value="1"/>
</dbReference>
<dbReference type="PROSITE" id="PS01058">
    <property type="entry name" value="SAICAR_SYNTHETASE_2"/>
    <property type="match status" value="1"/>
</dbReference>
<keyword id="KW-0067">ATP-binding</keyword>
<keyword id="KW-0436">Ligase</keyword>
<keyword id="KW-0547">Nucleotide-binding</keyword>
<keyword id="KW-0658">Purine biosynthesis</keyword>
<evidence type="ECO:0000255" key="1">
    <source>
        <dbReference type="HAMAP-Rule" id="MF_00137"/>
    </source>
</evidence>
<proteinExistence type="inferred from homology"/>
<accession>A5UWC5</accession>
<comment type="catalytic activity">
    <reaction evidence="1">
        <text>5-amino-1-(5-phospho-D-ribosyl)imidazole-4-carboxylate + L-aspartate + ATP = (2S)-2-[5-amino-1-(5-phospho-beta-D-ribosyl)imidazole-4-carboxamido]succinate + ADP + phosphate + 2 H(+)</text>
        <dbReference type="Rhea" id="RHEA:22628"/>
        <dbReference type="ChEBI" id="CHEBI:15378"/>
        <dbReference type="ChEBI" id="CHEBI:29991"/>
        <dbReference type="ChEBI" id="CHEBI:30616"/>
        <dbReference type="ChEBI" id="CHEBI:43474"/>
        <dbReference type="ChEBI" id="CHEBI:58443"/>
        <dbReference type="ChEBI" id="CHEBI:77657"/>
        <dbReference type="ChEBI" id="CHEBI:456216"/>
        <dbReference type="EC" id="6.3.2.6"/>
    </reaction>
</comment>
<comment type="pathway">
    <text evidence="1">Purine metabolism; IMP biosynthesis via de novo pathway; 5-amino-1-(5-phospho-D-ribosyl)imidazole-4-carboxamide from 5-amino-1-(5-phospho-D-ribosyl)imidazole-4-carboxylate: step 1/2.</text>
</comment>
<comment type="similarity">
    <text evidence="1">Belongs to the SAICAR synthetase family.</text>
</comment>
<organism>
    <name type="scientific">Roseiflexus sp. (strain RS-1)</name>
    <dbReference type="NCBI Taxonomy" id="357808"/>
    <lineage>
        <taxon>Bacteria</taxon>
        <taxon>Bacillati</taxon>
        <taxon>Chloroflexota</taxon>
        <taxon>Chloroflexia</taxon>
        <taxon>Chloroflexales</taxon>
        <taxon>Roseiflexineae</taxon>
        <taxon>Roseiflexaceae</taxon>
        <taxon>Roseiflexus</taxon>
    </lineage>
</organism>